<gene>
    <name type="primary">Dipk2b</name>
</gene>
<organism>
    <name type="scientific">Mus musculus</name>
    <name type="common">Mouse</name>
    <dbReference type="NCBI Taxonomy" id="10090"/>
    <lineage>
        <taxon>Eukaryota</taxon>
        <taxon>Metazoa</taxon>
        <taxon>Chordata</taxon>
        <taxon>Craniata</taxon>
        <taxon>Vertebrata</taxon>
        <taxon>Euteleostomi</taxon>
        <taxon>Mammalia</taxon>
        <taxon>Eutheria</taxon>
        <taxon>Euarchontoglires</taxon>
        <taxon>Glires</taxon>
        <taxon>Rodentia</taxon>
        <taxon>Myomorpha</taxon>
        <taxon>Muroidea</taxon>
        <taxon>Muridae</taxon>
        <taxon>Murinae</taxon>
        <taxon>Mus</taxon>
        <taxon>Mus</taxon>
    </lineage>
</organism>
<sequence>MESQWRGAAATAFHQHWLARLLLWVSTLSCSFSLPASLPPSLVPRVRSSYTMGKTFLGLDKCNACIGTSICKKFFKEEIRFDNSLASHLGLPPQDLHSYAANYSDDSKTWRPVEISQLVSRYQIEISDRRICASVSAPKTCSIERILQKTGRFQKWLQAKRLTPDLVQGLPSPFLRCPSQRLLDRVVRRYAEVVDAGSIFMDHFTAGDKLRLLYTLAVNAHPIILQIFPGAEGWPMPRYLGSCGRFLVSTSTRPLQEFYDASPEQAADLAYQLLRVLESLRSNDLNYFFYFTHVDAGMFGIFDNGHLFIRDASALGIIDKQEGSQAAARTGENEDIFSCLVSDCQIQLSSCDTVPEKQSLVLVCQQLLPQLLQGKFPSPVQKEIDSALSLCSKDNSTDLEVLGATSWLKDILRSLRTCDPRFAYRYPDCKYNDRF</sequence>
<dbReference type="EMBL" id="AK085770">
    <property type="protein sequence ID" value="BAC39535.1"/>
    <property type="molecule type" value="mRNA"/>
</dbReference>
<dbReference type="EMBL" id="AL732451">
    <property type="status" value="NOT_ANNOTATED_CDS"/>
    <property type="molecule type" value="Genomic_DNA"/>
</dbReference>
<dbReference type="EMBL" id="BX004855">
    <property type="status" value="NOT_ANNOTATED_CDS"/>
    <property type="molecule type" value="Genomic_DNA"/>
</dbReference>
<dbReference type="EMBL" id="CH466584">
    <property type="protein sequence ID" value="EDL35730.1"/>
    <property type="molecule type" value="Genomic_DNA"/>
</dbReference>
<dbReference type="EMBL" id="BC118515">
    <property type="protein sequence ID" value="AAI18516.1"/>
    <property type="molecule type" value="mRNA"/>
</dbReference>
<dbReference type="CCDS" id="CCDS30038.1"/>
<dbReference type="RefSeq" id="NP_780437.1">
    <property type="nucleotide sequence ID" value="NM_175228.4"/>
</dbReference>
<dbReference type="STRING" id="10090.ENSMUSP00000046567"/>
<dbReference type="GlyCosmos" id="Q8C3I9">
    <property type="glycosylation" value="2 sites, No reported glycans"/>
</dbReference>
<dbReference type="GlyGen" id="Q8C3I9">
    <property type="glycosylation" value="2 sites"/>
</dbReference>
<dbReference type="PaxDb" id="10090-ENSMUSP00000046567"/>
<dbReference type="Antibodypedia" id="455">
    <property type="antibodies" value="105 antibodies from 16 providers"/>
</dbReference>
<dbReference type="DNASU" id="75905"/>
<dbReference type="Ensembl" id="ENSMUST00000044188.5">
    <property type="protein sequence ID" value="ENSMUSP00000046567.5"/>
    <property type="gene ID" value="ENSMUSG00000037358.7"/>
</dbReference>
<dbReference type="GeneID" id="75905"/>
<dbReference type="KEGG" id="mmu:75905"/>
<dbReference type="UCSC" id="uc009ssp.1">
    <property type="organism name" value="mouse"/>
</dbReference>
<dbReference type="AGR" id="MGI:1923155"/>
<dbReference type="CTD" id="79742"/>
<dbReference type="MGI" id="MGI:1923155">
    <property type="gene designation" value="Dipk2b"/>
</dbReference>
<dbReference type="VEuPathDB" id="HostDB:ENSMUSG00000037358"/>
<dbReference type="eggNOG" id="ENOG502QRQX">
    <property type="taxonomic scope" value="Eukaryota"/>
</dbReference>
<dbReference type="GeneTree" id="ENSGT00520000055625"/>
<dbReference type="HOGENOM" id="CLU_051861_0_0_1"/>
<dbReference type="InParanoid" id="Q8C3I9"/>
<dbReference type="OMA" id="TQRFQKW"/>
<dbReference type="OrthoDB" id="10035316at2759"/>
<dbReference type="PhylomeDB" id="Q8C3I9"/>
<dbReference type="TreeFam" id="TF353643"/>
<dbReference type="BioGRID-ORCS" id="75905">
    <property type="hits" value="1 hit in 76 CRISPR screens"/>
</dbReference>
<dbReference type="ChiTaRS" id="Dipk2b">
    <property type="organism name" value="mouse"/>
</dbReference>
<dbReference type="PRO" id="PR:Q8C3I9"/>
<dbReference type="Proteomes" id="UP000000589">
    <property type="component" value="Chromosome X"/>
</dbReference>
<dbReference type="RNAct" id="Q8C3I9">
    <property type="molecule type" value="protein"/>
</dbReference>
<dbReference type="Bgee" id="ENSMUSG00000037358">
    <property type="expression patterns" value="Expressed in mesodermal cell in embryo and 30 other cell types or tissues"/>
</dbReference>
<dbReference type="GO" id="GO:0005576">
    <property type="term" value="C:extracellular region"/>
    <property type="evidence" value="ECO:0007669"/>
    <property type="project" value="UniProtKB-SubCell"/>
</dbReference>
<dbReference type="InterPro" id="IPR020519">
    <property type="entry name" value="DIPK2A/B"/>
</dbReference>
<dbReference type="InterPro" id="IPR022049">
    <property type="entry name" value="FAM69_kinase_dom"/>
</dbReference>
<dbReference type="PANTHER" id="PTHR32073:SF8">
    <property type="entry name" value="DIVERGENT PROTEIN KINASE DOMAIN 2B"/>
    <property type="match status" value="1"/>
</dbReference>
<dbReference type="PANTHER" id="PTHR32073">
    <property type="entry name" value="GH11358P"/>
    <property type="match status" value="1"/>
</dbReference>
<dbReference type="Pfam" id="PF12260">
    <property type="entry name" value="PIP49_C"/>
    <property type="match status" value="1"/>
</dbReference>
<protein>
    <recommendedName>
        <fullName evidence="2">Divergent protein kinase domain 2B</fullName>
    </recommendedName>
    <alternativeName>
        <fullName>Deleted in autism-related protein 1 homolog</fullName>
    </alternativeName>
</protein>
<comment type="subcellular location">
    <subcellularLocation>
        <location evidence="2">Secreted</location>
    </subcellularLocation>
</comment>
<comment type="similarity">
    <text evidence="2">Belongs to the DIPK family.</text>
</comment>
<proteinExistence type="evidence at transcript level"/>
<evidence type="ECO:0000255" key="1"/>
<evidence type="ECO:0000305" key="2"/>
<feature type="signal peptide" evidence="1">
    <location>
        <begin position="1"/>
        <end position="33"/>
    </location>
</feature>
<feature type="chain" id="PRO_0000353115" description="Divergent protein kinase domain 2B">
    <location>
        <begin position="34"/>
        <end position="435"/>
    </location>
</feature>
<feature type="glycosylation site" description="N-linked (GlcNAc...) asparagine" evidence="1">
    <location>
        <position position="102"/>
    </location>
</feature>
<feature type="glycosylation site" description="N-linked (GlcNAc...) asparagine" evidence="1">
    <location>
        <position position="395"/>
    </location>
</feature>
<reference key="1">
    <citation type="journal article" date="2005" name="Science">
        <title>The transcriptional landscape of the mammalian genome.</title>
        <authorList>
            <person name="Carninci P."/>
            <person name="Kasukawa T."/>
            <person name="Katayama S."/>
            <person name="Gough J."/>
            <person name="Frith M.C."/>
            <person name="Maeda N."/>
            <person name="Oyama R."/>
            <person name="Ravasi T."/>
            <person name="Lenhard B."/>
            <person name="Wells C."/>
            <person name="Kodzius R."/>
            <person name="Shimokawa K."/>
            <person name="Bajic V.B."/>
            <person name="Brenner S.E."/>
            <person name="Batalov S."/>
            <person name="Forrest A.R."/>
            <person name="Zavolan M."/>
            <person name="Davis M.J."/>
            <person name="Wilming L.G."/>
            <person name="Aidinis V."/>
            <person name="Allen J.E."/>
            <person name="Ambesi-Impiombato A."/>
            <person name="Apweiler R."/>
            <person name="Aturaliya R.N."/>
            <person name="Bailey T.L."/>
            <person name="Bansal M."/>
            <person name="Baxter L."/>
            <person name="Beisel K.W."/>
            <person name="Bersano T."/>
            <person name="Bono H."/>
            <person name="Chalk A.M."/>
            <person name="Chiu K.P."/>
            <person name="Choudhary V."/>
            <person name="Christoffels A."/>
            <person name="Clutterbuck D.R."/>
            <person name="Crowe M.L."/>
            <person name="Dalla E."/>
            <person name="Dalrymple B.P."/>
            <person name="de Bono B."/>
            <person name="Della Gatta G."/>
            <person name="di Bernardo D."/>
            <person name="Down T."/>
            <person name="Engstrom P."/>
            <person name="Fagiolini M."/>
            <person name="Faulkner G."/>
            <person name="Fletcher C.F."/>
            <person name="Fukushima T."/>
            <person name="Furuno M."/>
            <person name="Futaki S."/>
            <person name="Gariboldi M."/>
            <person name="Georgii-Hemming P."/>
            <person name="Gingeras T.R."/>
            <person name="Gojobori T."/>
            <person name="Green R.E."/>
            <person name="Gustincich S."/>
            <person name="Harbers M."/>
            <person name="Hayashi Y."/>
            <person name="Hensch T.K."/>
            <person name="Hirokawa N."/>
            <person name="Hill D."/>
            <person name="Huminiecki L."/>
            <person name="Iacono M."/>
            <person name="Ikeo K."/>
            <person name="Iwama A."/>
            <person name="Ishikawa T."/>
            <person name="Jakt M."/>
            <person name="Kanapin A."/>
            <person name="Katoh M."/>
            <person name="Kawasawa Y."/>
            <person name="Kelso J."/>
            <person name="Kitamura H."/>
            <person name="Kitano H."/>
            <person name="Kollias G."/>
            <person name="Krishnan S.P."/>
            <person name="Kruger A."/>
            <person name="Kummerfeld S.K."/>
            <person name="Kurochkin I.V."/>
            <person name="Lareau L.F."/>
            <person name="Lazarevic D."/>
            <person name="Lipovich L."/>
            <person name="Liu J."/>
            <person name="Liuni S."/>
            <person name="McWilliam S."/>
            <person name="Madan Babu M."/>
            <person name="Madera M."/>
            <person name="Marchionni L."/>
            <person name="Matsuda H."/>
            <person name="Matsuzawa S."/>
            <person name="Miki H."/>
            <person name="Mignone F."/>
            <person name="Miyake S."/>
            <person name="Morris K."/>
            <person name="Mottagui-Tabar S."/>
            <person name="Mulder N."/>
            <person name="Nakano N."/>
            <person name="Nakauchi H."/>
            <person name="Ng P."/>
            <person name="Nilsson R."/>
            <person name="Nishiguchi S."/>
            <person name="Nishikawa S."/>
            <person name="Nori F."/>
            <person name="Ohara O."/>
            <person name="Okazaki Y."/>
            <person name="Orlando V."/>
            <person name="Pang K.C."/>
            <person name="Pavan W.J."/>
            <person name="Pavesi G."/>
            <person name="Pesole G."/>
            <person name="Petrovsky N."/>
            <person name="Piazza S."/>
            <person name="Reed J."/>
            <person name="Reid J.F."/>
            <person name="Ring B.Z."/>
            <person name="Ringwald M."/>
            <person name="Rost B."/>
            <person name="Ruan Y."/>
            <person name="Salzberg S.L."/>
            <person name="Sandelin A."/>
            <person name="Schneider C."/>
            <person name="Schoenbach C."/>
            <person name="Sekiguchi K."/>
            <person name="Semple C.A."/>
            <person name="Seno S."/>
            <person name="Sessa L."/>
            <person name="Sheng Y."/>
            <person name="Shibata Y."/>
            <person name="Shimada H."/>
            <person name="Shimada K."/>
            <person name="Silva D."/>
            <person name="Sinclair B."/>
            <person name="Sperling S."/>
            <person name="Stupka E."/>
            <person name="Sugiura K."/>
            <person name="Sultana R."/>
            <person name="Takenaka Y."/>
            <person name="Taki K."/>
            <person name="Tammoja K."/>
            <person name="Tan S.L."/>
            <person name="Tang S."/>
            <person name="Taylor M.S."/>
            <person name="Tegner J."/>
            <person name="Teichmann S.A."/>
            <person name="Ueda H.R."/>
            <person name="van Nimwegen E."/>
            <person name="Verardo R."/>
            <person name="Wei C.L."/>
            <person name="Yagi K."/>
            <person name="Yamanishi H."/>
            <person name="Zabarovsky E."/>
            <person name="Zhu S."/>
            <person name="Zimmer A."/>
            <person name="Hide W."/>
            <person name="Bult C."/>
            <person name="Grimmond S.M."/>
            <person name="Teasdale R.D."/>
            <person name="Liu E.T."/>
            <person name="Brusic V."/>
            <person name="Quackenbush J."/>
            <person name="Wahlestedt C."/>
            <person name="Mattick J.S."/>
            <person name="Hume D.A."/>
            <person name="Kai C."/>
            <person name="Sasaki D."/>
            <person name="Tomaru Y."/>
            <person name="Fukuda S."/>
            <person name="Kanamori-Katayama M."/>
            <person name="Suzuki M."/>
            <person name="Aoki J."/>
            <person name="Arakawa T."/>
            <person name="Iida J."/>
            <person name="Imamura K."/>
            <person name="Itoh M."/>
            <person name="Kato T."/>
            <person name="Kawaji H."/>
            <person name="Kawagashira N."/>
            <person name="Kawashima T."/>
            <person name="Kojima M."/>
            <person name="Kondo S."/>
            <person name="Konno H."/>
            <person name="Nakano K."/>
            <person name="Ninomiya N."/>
            <person name="Nishio T."/>
            <person name="Okada M."/>
            <person name="Plessy C."/>
            <person name="Shibata K."/>
            <person name="Shiraki T."/>
            <person name="Suzuki S."/>
            <person name="Tagami M."/>
            <person name="Waki K."/>
            <person name="Watahiki A."/>
            <person name="Okamura-Oho Y."/>
            <person name="Suzuki H."/>
            <person name="Kawai J."/>
            <person name="Hayashizaki Y."/>
        </authorList>
    </citation>
    <scope>NUCLEOTIDE SEQUENCE [LARGE SCALE MRNA]</scope>
    <source>
        <strain>C57BL/6J</strain>
        <tissue>Heart</tissue>
    </source>
</reference>
<reference key="2">
    <citation type="journal article" date="2009" name="PLoS Biol.">
        <title>Lineage-specific biology revealed by a finished genome assembly of the mouse.</title>
        <authorList>
            <person name="Church D.M."/>
            <person name="Goodstadt L."/>
            <person name="Hillier L.W."/>
            <person name="Zody M.C."/>
            <person name="Goldstein S."/>
            <person name="She X."/>
            <person name="Bult C.J."/>
            <person name="Agarwala R."/>
            <person name="Cherry J.L."/>
            <person name="DiCuccio M."/>
            <person name="Hlavina W."/>
            <person name="Kapustin Y."/>
            <person name="Meric P."/>
            <person name="Maglott D."/>
            <person name="Birtle Z."/>
            <person name="Marques A.C."/>
            <person name="Graves T."/>
            <person name="Zhou S."/>
            <person name="Teague B."/>
            <person name="Potamousis K."/>
            <person name="Churas C."/>
            <person name="Place M."/>
            <person name="Herschleb J."/>
            <person name="Runnheim R."/>
            <person name="Forrest D."/>
            <person name="Amos-Landgraf J."/>
            <person name="Schwartz D.C."/>
            <person name="Cheng Z."/>
            <person name="Lindblad-Toh K."/>
            <person name="Eichler E.E."/>
            <person name="Ponting C.P."/>
        </authorList>
    </citation>
    <scope>NUCLEOTIDE SEQUENCE [LARGE SCALE GENOMIC DNA]</scope>
    <source>
        <strain>C57BL/6J</strain>
    </source>
</reference>
<reference key="3">
    <citation type="submission" date="2005-07" db="EMBL/GenBank/DDBJ databases">
        <authorList>
            <person name="Mural R.J."/>
            <person name="Adams M.D."/>
            <person name="Myers E.W."/>
            <person name="Smith H.O."/>
            <person name="Venter J.C."/>
        </authorList>
    </citation>
    <scope>NUCLEOTIDE SEQUENCE [LARGE SCALE GENOMIC DNA]</scope>
</reference>
<reference key="4">
    <citation type="journal article" date="2004" name="Genome Res.">
        <title>The status, quality, and expansion of the NIH full-length cDNA project: the Mammalian Gene Collection (MGC).</title>
        <authorList>
            <consortium name="The MGC Project Team"/>
        </authorList>
    </citation>
    <scope>NUCLEOTIDE SEQUENCE [LARGE SCALE MRNA]</scope>
</reference>
<keyword id="KW-0325">Glycoprotein</keyword>
<keyword id="KW-1185">Reference proteome</keyword>
<keyword id="KW-0964">Secreted</keyword>
<keyword id="KW-0732">Signal</keyword>
<name>DIK2B_MOUSE</name>
<accession>Q8C3I9</accession>